<comment type="alternative products">
    <event type="alternative splicing"/>
    <isoform>
        <id>A6X942-1</id>
        <name>1</name>
        <sequence type="displayed"/>
    </isoform>
    <isoform>
        <id>A6X942-2</id>
        <name>2</name>
        <sequence type="described" ref="VSP_029013"/>
    </isoform>
</comment>
<keyword id="KW-0025">Alternative splicing</keyword>
<keyword id="KW-1185">Reference proteome</keyword>
<keyword id="KW-0727">SH2 domain</keyword>
<accession>A6X942</accession>
<accession>B2RSQ7</accession>
<accession>Q8BQI0</accession>
<organism>
    <name type="scientific">Mus musculus</name>
    <name type="common">Mouse</name>
    <dbReference type="NCBI Taxonomy" id="10090"/>
    <lineage>
        <taxon>Eukaryota</taxon>
        <taxon>Metazoa</taxon>
        <taxon>Chordata</taxon>
        <taxon>Craniata</taxon>
        <taxon>Vertebrata</taxon>
        <taxon>Euteleostomi</taxon>
        <taxon>Mammalia</taxon>
        <taxon>Eutheria</taxon>
        <taxon>Euarchontoglires</taxon>
        <taxon>Glires</taxon>
        <taxon>Rodentia</taxon>
        <taxon>Myomorpha</taxon>
        <taxon>Muroidea</taxon>
        <taxon>Muridae</taxon>
        <taxon>Murinae</taxon>
        <taxon>Mus</taxon>
        <taxon>Mus</taxon>
    </lineage>
</organism>
<feature type="chain" id="PRO_0000308601" description="SH2 domain-containing protein 4B">
    <location>
        <begin position="1"/>
        <end position="431"/>
    </location>
</feature>
<feature type="domain" description="SH2" evidence="1">
    <location>
        <begin position="325"/>
        <end position="417"/>
    </location>
</feature>
<feature type="region of interest" description="Disordered" evidence="2">
    <location>
        <begin position="201"/>
        <end position="235"/>
    </location>
</feature>
<feature type="compositionally biased region" description="Basic and acidic residues" evidence="2">
    <location>
        <begin position="211"/>
        <end position="235"/>
    </location>
</feature>
<feature type="splice variant" id="VSP_029013" description="In isoform 2." evidence="3">
    <location>
        <begin position="1"/>
        <end position="253"/>
    </location>
</feature>
<protein>
    <recommendedName>
        <fullName>SH2 domain-containing protein 4B</fullName>
    </recommendedName>
</protein>
<dbReference type="EMBL" id="AK050671">
    <property type="protein sequence ID" value="BAC34372.1"/>
    <property type="molecule type" value="mRNA"/>
</dbReference>
<dbReference type="EMBL" id="AK134033">
    <property type="protein sequence ID" value="BAE21988.1"/>
    <property type="molecule type" value="mRNA"/>
</dbReference>
<dbReference type="EMBL" id="CT025537">
    <property type="status" value="NOT_ANNOTATED_CDS"/>
    <property type="molecule type" value="Genomic_DNA"/>
</dbReference>
<dbReference type="EMBL" id="BC138964">
    <property type="protein sequence ID" value="AAI38965.1"/>
    <property type="molecule type" value="mRNA"/>
</dbReference>
<dbReference type="CCDS" id="CCDS26955.1">
    <molecule id="A6X942-1"/>
</dbReference>
<dbReference type="RefSeq" id="NP_808484.2">
    <molecule id="A6X942-1"/>
    <property type="nucleotide sequence ID" value="NM_177816.5"/>
</dbReference>
<dbReference type="RefSeq" id="XP_017171549.1">
    <property type="nucleotide sequence ID" value="XM_017316060.1"/>
</dbReference>
<dbReference type="SMR" id="A6X942"/>
<dbReference type="BioGRID" id="236593">
    <property type="interactions" value="1"/>
</dbReference>
<dbReference type="FunCoup" id="A6X942">
    <property type="interactions" value="616"/>
</dbReference>
<dbReference type="STRING" id="10090.ENSMUSP00000093699"/>
<dbReference type="PhosphoSitePlus" id="A6X942"/>
<dbReference type="PaxDb" id="10090-ENSMUSP00000093699"/>
<dbReference type="ProteomicsDB" id="257130">
    <molecule id="A6X942-1"/>
</dbReference>
<dbReference type="ProteomicsDB" id="257131">
    <molecule id="A6X942-2"/>
</dbReference>
<dbReference type="Antibodypedia" id="48780">
    <property type="antibodies" value="62 antibodies from 16 providers"/>
</dbReference>
<dbReference type="Ensembl" id="ENSMUST00000070328.10">
    <molecule id="A6X942-2"/>
    <property type="protein sequence ID" value="ENSMUSP00000064708.4"/>
    <property type="gene ID" value="ENSMUSG00000037833.15"/>
</dbReference>
<dbReference type="Ensembl" id="ENSMUST00000096000.4">
    <molecule id="A6X942-1"/>
    <property type="protein sequence ID" value="ENSMUSP00000093699.4"/>
    <property type="gene ID" value="ENSMUSG00000037833.15"/>
</dbReference>
<dbReference type="GeneID" id="328381"/>
<dbReference type="KEGG" id="mmu:328381"/>
<dbReference type="UCSC" id="uc007tcd.1">
    <molecule id="A6X942-2"/>
    <property type="organism name" value="mouse"/>
</dbReference>
<dbReference type="UCSC" id="uc007tce.1">
    <molecule id="A6X942-1"/>
    <property type="organism name" value="mouse"/>
</dbReference>
<dbReference type="AGR" id="MGI:1925182"/>
<dbReference type="CTD" id="387694"/>
<dbReference type="MGI" id="MGI:1925182">
    <property type="gene designation" value="Sh2d4b"/>
</dbReference>
<dbReference type="VEuPathDB" id="HostDB:ENSMUSG00000037833"/>
<dbReference type="eggNOG" id="ENOG502QVV5">
    <property type="taxonomic scope" value="Eukaryota"/>
</dbReference>
<dbReference type="GeneTree" id="ENSGT00940000159732"/>
<dbReference type="HOGENOM" id="CLU_1556950_0_0_1"/>
<dbReference type="InParanoid" id="A6X942"/>
<dbReference type="OMA" id="DHEWKEQ"/>
<dbReference type="OrthoDB" id="10003345at2759"/>
<dbReference type="PhylomeDB" id="A6X942"/>
<dbReference type="TreeFam" id="TF336893"/>
<dbReference type="BioGRID-ORCS" id="328381">
    <property type="hits" value="1 hit in 76 CRISPR screens"/>
</dbReference>
<dbReference type="PRO" id="PR:A6X942"/>
<dbReference type="Proteomes" id="UP000000589">
    <property type="component" value="Chromosome 14"/>
</dbReference>
<dbReference type="RNAct" id="A6X942">
    <property type="molecule type" value="protein"/>
</dbReference>
<dbReference type="Bgee" id="ENSMUSG00000037833">
    <property type="expression patterns" value="Expressed in animal zygote and 53 other cell types or tissues"/>
</dbReference>
<dbReference type="CDD" id="cd10351">
    <property type="entry name" value="SH2_SH2D4B"/>
    <property type="match status" value="1"/>
</dbReference>
<dbReference type="FunFam" id="3.30.505.10:FF:000034">
    <property type="entry name" value="SH2 domain-containing protein 4A"/>
    <property type="match status" value="1"/>
</dbReference>
<dbReference type="Gene3D" id="3.30.505.10">
    <property type="entry name" value="SH2 domain"/>
    <property type="match status" value="1"/>
</dbReference>
<dbReference type="InterPro" id="IPR000980">
    <property type="entry name" value="SH2"/>
</dbReference>
<dbReference type="InterPro" id="IPR036860">
    <property type="entry name" value="SH2_dom_sf"/>
</dbReference>
<dbReference type="InterPro" id="IPR035839">
    <property type="entry name" value="SH2D4B_SH2"/>
</dbReference>
<dbReference type="PANTHER" id="PTHR14388:SF7">
    <property type="entry name" value="SH2 DOMAIN-CONTAINING PROTEIN 4B"/>
    <property type="match status" value="1"/>
</dbReference>
<dbReference type="PANTHER" id="PTHR14388">
    <property type="entry name" value="T CELL-SPECIFIC ADAPTER PROTEIN TSAD"/>
    <property type="match status" value="1"/>
</dbReference>
<dbReference type="Pfam" id="PF00017">
    <property type="entry name" value="SH2"/>
    <property type="match status" value="1"/>
</dbReference>
<dbReference type="PRINTS" id="PR00401">
    <property type="entry name" value="SH2DOMAIN"/>
</dbReference>
<dbReference type="SMART" id="SM00252">
    <property type="entry name" value="SH2"/>
    <property type="match status" value="1"/>
</dbReference>
<dbReference type="SUPFAM" id="SSF55550">
    <property type="entry name" value="SH2 domain"/>
    <property type="match status" value="1"/>
</dbReference>
<dbReference type="PROSITE" id="PS50001">
    <property type="entry name" value="SH2"/>
    <property type="match status" value="1"/>
</dbReference>
<gene>
    <name type="primary">Sh2d4b</name>
</gene>
<evidence type="ECO:0000255" key="1">
    <source>
        <dbReference type="PROSITE-ProRule" id="PRU00191"/>
    </source>
</evidence>
<evidence type="ECO:0000256" key="2">
    <source>
        <dbReference type="SAM" id="MobiDB-lite"/>
    </source>
</evidence>
<evidence type="ECO:0000303" key="3">
    <source>
    </source>
</evidence>
<sequence length="431" mass="51120">MLQQILQDMYIDPELLAELSDVQKHILFYKMREEQLRRWREREAWDALAQAEGLRPAKVKRASNKHLQWLLGADGEVWVWVMGEGPGDKPYEEISEELIAERARLQAQKEAEELWRQKEAEITKKFRDALANEKARILAEKWKVEMEDRKAAKILEERIHEEFKRKEEEERRRGEEQIRLQEEQRAKELYWTLKQAQLHSQASENEEREWEEQLRRSKAADEERSRRAQRARDEYRRHSLRAIQKGTVAGLSTMFQELGQNHEQEARLYHQLPDTSPPSPLTGPDRTWERPLRPLSREVIVRWFKEEQLPRRAGFERNTKSIAPWFHGIISRESAEDLLENMTEGAFLVRVSEKIWGYTLSYRLQRGFKHFLVDASGDFYSFLGVDPNRHATLTDLIDFHKEEIITVSGGELLQEPCGQRDSPPDYHLLFE</sequence>
<name>SH24B_MOUSE</name>
<reference key="1">
    <citation type="journal article" date="2005" name="Science">
        <title>The transcriptional landscape of the mammalian genome.</title>
        <authorList>
            <person name="Carninci P."/>
            <person name="Kasukawa T."/>
            <person name="Katayama S."/>
            <person name="Gough J."/>
            <person name="Frith M.C."/>
            <person name="Maeda N."/>
            <person name="Oyama R."/>
            <person name="Ravasi T."/>
            <person name="Lenhard B."/>
            <person name="Wells C."/>
            <person name="Kodzius R."/>
            <person name="Shimokawa K."/>
            <person name="Bajic V.B."/>
            <person name="Brenner S.E."/>
            <person name="Batalov S."/>
            <person name="Forrest A.R."/>
            <person name="Zavolan M."/>
            <person name="Davis M.J."/>
            <person name="Wilming L.G."/>
            <person name="Aidinis V."/>
            <person name="Allen J.E."/>
            <person name="Ambesi-Impiombato A."/>
            <person name="Apweiler R."/>
            <person name="Aturaliya R.N."/>
            <person name="Bailey T.L."/>
            <person name="Bansal M."/>
            <person name="Baxter L."/>
            <person name="Beisel K.W."/>
            <person name="Bersano T."/>
            <person name="Bono H."/>
            <person name="Chalk A.M."/>
            <person name="Chiu K.P."/>
            <person name="Choudhary V."/>
            <person name="Christoffels A."/>
            <person name="Clutterbuck D.R."/>
            <person name="Crowe M.L."/>
            <person name="Dalla E."/>
            <person name="Dalrymple B.P."/>
            <person name="de Bono B."/>
            <person name="Della Gatta G."/>
            <person name="di Bernardo D."/>
            <person name="Down T."/>
            <person name="Engstrom P."/>
            <person name="Fagiolini M."/>
            <person name="Faulkner G."/>
            <person name="Fletcher C.F."/>
            <person name="Fukushima T."/>
            <person name="Furuno M."/>
            <person name="Futaki S."/>
            <person name="Gariboldi M."/>
            <person name="Georgii-Hemming P."/>
            <person name="Gingeras T.R."/>
            <person name="Gojobori T."/>
            <person name="Green R.E."/>
            <person name="Gustincich S."/>
            <person name="Harbers M."/>
            <person name="Hayashi Y."/>
            <person name="Hensch T.K."/>
            <person name="Hirokawa N."/>
            <person name="Hill D."/>
            <person name="Huminiecki L."/>
            <person name="Iacono M."/>
            <person name="Ikeo K."/>
            <person name="Iwama A."/>
            <person name="Ishikawa T."/>
            <person name="Jakt M."/>
            <person name="Kanapin A."/>
            <person name="Katoh M."/>
            <person name="Kawasawa Y."/>
            <person name="Kelso J."/>
            <person name="Kitamura H."/>
            <person name="Kitano H."/>
            <person name="Kollias G."/>
            <person name="Krishnan S.P."/>
            <person name="Kruger A."/>
            <person name="Kummerfeld S.K."/>
            <person name="Kurochkin I.V."/>
            <person name="Lareau L.F."/>
            <person name="Lazarevic D."/>
            <person name="Lipovich L."/>
            <person name="Liu J."/>
            <person name="Liuni S."/>
            <person name="McWilliam S."/>
            <person name="Madan Babu M."/>
            <person name="Madera M."/>
            <person name="Marchionni L."/>
            <person name="Matsuda H."/>
            <person name="Matsuzawa S."/>
            <person name="Miki H."/>
            <person name="Mignone F."/>
            <person name="Miyake S."/>
            <person name="Morris K."/>
            <person name="Mottagui-Tabar S."/>
            <person name="Mulder N."/>
            <person name="Nakano N."/>
            <person name="Nakauchi H."/>
            <person name="Ng P."/>
            <person name="Nilsson R."/>
            <person name="Nishiguchi S."/>
            <person name="Nishikawa S."/>
            <person name="Nori F."/>
            <person name="Ohara O."/>
            <person name="Okazaki Y."/>
            <person name="Orlando V."/>
            <person name="Pang K.C."/>
            <person name="Pavan W.J."/>
            <person name="Pavesi G."/>
            <person name="Pesole G."/>
            <person name="Petrovsky N."/>
            <person name="Piazza S."/>
            <person name="Reed J."/>
            <person name="Reid J.F."/>
            <person name="Ring B.Z."/>
            <person name="Ringwald M."/>
            <person name="Rost B."/>
            <person name="Ruan Y."/>
            <person name="Salzberg S.L."/>
            <person name="Sandelin A."/>
            <person name="Schneider C."/>
            <person name="Schoenbach C."/>
            <person name="Sekiguchi K."/>
            <person name="Semple C.A."/>
            <person name="Seno S."/>
            <person name="Sessa L."/>
            <person name="Sheng Y."/>
            <person name="Shibata Y."/>
            <person name="Shimada H."/>
            <person name="Shimada K."/>
            <person name="Silva D."/>
            <person name="Sinclair B."/>
            <person name="Sperling S."/>
            <person name="Stupka E."/>
            <person name="Sugiura K."/>
            <person name="Sultana R."/>
            <person name="Takenaka Y."/>
            <person name="Taki K."/>
            <person name="Tammoja K."/>
            <person name="Tan S.L."/>
            <person name="Tang S."/>
            <person name="Taylor M.S."/>
            <person name="Tegner J."/>
            <person name="Teichmann S.A."/>
            <person name="Ueda H.R."/>
            <person name="van Nimwegen E."/>
            <person name="Verardo R."/>
            <person name="Wei C.L."/>
            <person name="Yagi K."/>
            <person name="Yamanishi H."/>
            <person name="Zabarovsky E."/>
            <person name="Zhu S."/>
            <person name="Zimmer A."/>
            <person name="Hide W."/>
            <person name="Bult C."/>
            <person name="Grimmond S.M."/>
            <person name="Teasdale R.D."/>
            <person name="Liu E.T."/>
            <person name="Brusic V."/>
            <person name="Quackenbush J."/>
            <person name="Wahlestedt C."/>
            <person name="Mattick J.S."/>
            <person name="Hume D.A."/>
            <person name="Kai C."/>
            <person name="Sasaki D."/>
            <person name="Tomaru Y."/>
            <person name="Fukuda S."/>
            <person name="Kanamori-Katayama M."/>
            <person name="Suzuki M."/>
            <person name="Aoki J."/>
            <person name="Arakawa T."/>
            <person name="Iida J."/>
            <person name="Imamura K."/>
            <person name="Itoh M."/>
            <person name="Kato T."/>
            <person name="Kawaji H."/>
            <person name="Kawagashira N."/>
            <person name="Kawashima T."/>
            <person name="Kojima M."/>
            <person name="Kondo S."/>
            <person name="Konno H."/>
            <person name="Nakano K."/>
            <person name="Ninomiya N."/>
            <person name="Nishio T."/>
            <person name="Okada M."/>
            <person name="Plessy C."/>
            <person name="Shibata K."/>
            <person name="Shiraki T."/>
            <person name="Suzuki S."/>
            <person name="Tagami M."/>
            <person name="Waki K."/>
            <person name="Watahiki A."/>
            <person name="Okamura-Oho Y."/>
            <person name="Suzuki H."/>
            <person name="Kawai J."/>
            <person name="Hayashizaki Y."/>
        </authorList>
    </citation>
    <scope>NUCLEOTIDE SEQUENCE [LARGE SCALE MRNA] (ISOFORM 2)</scope>
    <source>
        <strain>C57BL/6J</strain>
        <tissue>Thymus</tissue>
    </source>
</reference>
<reference key="2">
    <citation type="journal article" date="2009" name="PLoS Biol.">
        <title>Lineage-specific biology revealed by a finished genome assembly of the mouse.</title>
        <authorList>
            <person name="Church D.M."/>
            <person name="Goodstadt L."/>
            <person name="Hillier L.W."/>
            <person name="Zody M.C."/>
            <person name="Goldstein S."/>
            <person name="She X."/>
            <person name="Bult C.J."/>
            <person name="Agarwala R."/>
            <person name="Cherry J.L."/>
            <person name="DiCuccio M."/>
            <person name="Hlavina W."/>
            <person name="Kapustin Y."/>
            <person name="Meric P."/>
            <person name="Maglott D."/>
            <person name="Birtle Z."/>
            <person name="Marques A.C."/>
            <person name="Graves T."/>
            <person name="Zhou S."/>
            <person name="Teague B."/>
            <person name="Potamousis K."/>
            <person name="Churas C."/>
            <person name="Place M."/>
            <person name="Herschleb J."/>
            <person name="Runnheim R."/>
            <person name="Forrest D."/>
            <person name="Amos-Landgraf J."/>
            <person name="Schwartz D.C."/>
            <person name="Cheng Z."/>
            <person name="Lindblad-Toh K."/>
            <person name="Eichler E.E."/>
            <person name="Ponting C.P."/>
        </authorList>
    </citation>
    <scope>NUCLEOTIDE SEQUENCE [LARGE SCALE GENOMIC DNA]</scope>
    <source>
        <strain>C57BL/6J</strain>
    </source>
</reference>
<reference key="3">
    <citation type="journal article" date="2004" name="Genome Res.">
        <title>The status, quality, and expansion of the NIH full-length cDNA project: the Mammalian Gene Collection (MGC).</title>
        <authorList>
            <consortium name="The MGC Project Team"/>
        </authorList>
    </citation>
    <scope>NUCLEOTIDE SEQUENCE [LARGE SCALE MRNA] (ISOFORM 1)</scope>
    <source>
        <tissue>Brain</tissue>
    </source>
</reference>
<proteinExistence type="evidence at transcript level"/>